<sequence length="277" mass="30883">MLVDELGVKIVHAQHVPAPYLVQRMREIHERDENRQRHAQVDVQRRRDQPERGQHQHRRNRDADHHPDGRTLAGQIVAHPVSHRVRQPRPVAIADVLPRVGPRADCVVAHSLQGSPRRRERRRGQTAHQRLGRRSGNAIACPLYLENAAGPEPDTKRAEGRRFGAFGGGDLRWMADRVPRQGSGRRGLGSRSGAGVPQGADARGWRHTADGVPRVGQPAIRRGVPGFWCWLDHVLTGFGGRNAICAIEDGVEPRVAWWALCTDFDVPRSMGRRTPGG</sequence>
<gene>
    <name evidence="4" type="ordered locus">Rv2742c</name>
</gene>
<organism>
    <name type="scientific">Mycobacterium tuberculosis (strain ATCC 25618 / H37Rv)</name>
    <dbReference type="NCBI Taxonomy" id="83332"/>
    <lineage>
        <taxon>Bacteria</taxon>
        <taxon>Bacillati</taxon>
        <taxon>Actinomycetota</taxon>
        <taxon>Actinomycetes</taxon>
        <taxon>Mycobacteriales</taxon>
        <taxon>Mycobacteriaceae</taxon>
        <taxon>Mycobacterium</taxon>
        <taxon>Mycobacterium tuberculosis complex</taxon>
    </lineage>
</organism>
<feature type="chain" id="PRO_0000450867" description="Putative envelope-preserving system protein Rv2742c">
    <location>
        <begin position="1"/>
        <end position="277"/>
    </location>
</feature>
<feature type="region of interest" description="Disordered" evidence="1">
    <location>
        <begin position="31"/>
        <end position="70"/>
    </location>
</feature>
<feature type="region of interest" description="Disordered" evidence="1">
    <location>
        <begin position="113"/>
        <end position="133"/>
    </location>
</feature>
<feature type="region of interest" description="Disordered" evidence="1">
    <location>
        <begin position="180"/>
        <end position="210"/>
    </location>
</feature>
<feature type="compositionally biased region" description="Basic and acidic residues" evidence="1">
    <location>
        <begin position="31"/>
        <end position="54"/>
    </location>
</feature>
<feature type="compositionally biased region" description="Basic residues" evidence="1">
    <location>
        <begin position="116"/>
        <end position="133"/>
    </location>
</feature>
<evidence type="ECO:0000256" key="1">
    <source>
        <dbReference type="SAM" id="MobiDB-lite"/>
    </source>
</evidence>
<evidence type="ECO:0000269" key="2">
    <source>
    </source>
</evidence>
<evidence type="ECO:0000305" key="3"/>
<evidence type="ECO:0000312" key="4">
    <source>
        <dbReference type="EMBL" id="CCP45541.1"/>
    </source>
</evidence>
<comment type="function">
    <text evidence="2">Involved in preservation of envelope integrity and tolerance to surface stress (PubMed:25899163). Reverses the inhibitory effect of PspA on ClgR activity (PubMed:25899163). Facilitates intracellular growth of M.tuberculosis (PubMed:25899163).</text>
</comment>
<comment type="subunit">
    <text evidence="2">Interacts with Rv2743c.</text>
</comment>
<comment type="induction">
    <text evidence="2">Expression is regulated by ClgR.</text>
</comment>
<comment type="disruption phenotype">
    <text evidence="2">The Rv2743c-Rv2742c double mutation reduces intracellular ATP levels under surface-stress conditions to less than 60% of wild-type levels.</text>
</comment>
<accession>O33285</accession>
<accession>F2GPI0</accession>
<accession>I6X591</accession>
<protein>
    <recommendedName>
        <fullName evidence="3">Putative envelope-preserving system protein Rv2742c</fullName>
    </recommendedName>
</protein>
<keyword id="KW-1185">Reference proteome</keyword>
<keyword id="KW-0346">Stress response</keyword>
<dbReference type="EMBL" id="AL123456">
    <property type="protein sequence ID" value="CCP45541.1"/>
    <property type="molecule type" value="Genomic_DNA"/>
</dbReference>
<dbReference type="RefSeq" id="NP_217258.1">
    <property type="nucleotide sequence ID" value="NC_000962.3"/>
</dbReference>
<dbReference type="RefSeq" id="WP_003414020.1">
    <property type="nucleotide sequence ID" value="NC_000962.3"/>
</dbReference>
<dbReference type="STRING" id="83332.Rv2742c"/>
<dbReference type="PaxDb" id="83332-Rv2742c"/>
<dbReference type="DNASU" id="888332"/>
<dbReference type="GeneID" id="888332"/>
<dbReference type="KEGG" id="mtu:Rv2742c"/>
<dbReference type="KEGG" id="mtv:RVBD_2742c"/>
<dbReference type="PATRIC" id="fig|83332.111.peg.3050"/>
<dbReference type="TubercuList" id="Rv2742c"/>
<dbReference type="eggNOG" id="ENOG5032295">
    <property type="taxonomic scope" value="Bacteria"/>
</dbReference>
<dbReference type="InParanoid" id="O33285"/>
<dbReference type="OrthoDB" id="3215033at2"/>
<dbReference type="Proteomes" id="UP000001584">
    <property type="component" value="Chromosome"/>
</dbReference>
<dbReference type="GO" id="GO:0005886">
    <property type="term" value="C:plasma membrane"/>
    <property type="evidence" value="ECO:0007005"/>
    <property type="project" value="MTBBASE"/>
</dbReference>
<dbReference type="InterPro" id="IPR021408">
    <property type="entry name" value="DUF3046"/>
</dbReference>
<dbReference type="Pfam" id="PF11248">
    <property type="entry name" value="DUF3046"/>
    <property type="match status" value="1"/>
</dbReference>
<reference key="1">
    <citation type="journal article" date="1998" name="Nature">
        <title>Deciphering the biology of Mycobacterium tuberculosis from the complete genome sequence.</title>
        <authorList>
            <person name="Cole S.T."/>
            <person name="Brosch R."/>
            <person name="Parkhill J."/>
            <person name="Garnier T."/>
            <person name="Churcher C.M."/>
            <person name="Harris D.E."/>
            <person name="Gordon S.V."/>
            <person name="Eiglmeier K."/>
            <person name="Gas S."/>
            <person name="Barry C.E. III"/>
            <person name="Tekaia F."/>
            <person name="Badcock K."/>
            <person name="Basham D."/>
            <person name="Brown D."/>
            <person name="Chillingworth T."/>
            <person name="Connor R."/>
            <person name="Davies R.M."/>
            <person name="Devlin K."/>
            <person name="Feltwell T."/>
            <person name="Gentles S."/>
            <person name="Hamlin N."/>
            <person name="Holroyd S."/>
            <person name="Hornsby T."/>
            <person name="Jagels K."/>
            <person name="Krogh A."/>
            <person name="McLean J."/>
            <person name="Moule S."/>
            <person name="Murphy L.D."/>
            <person name="Oliver S."/>
            <person name="Osborne J."/>
            <person name="Quail M.A."/>
            <person name="Rajandream M.A."/>
            <person name="Rogers J."/>
            <person name="Rutter S."/>
            <person name="Seeger K."/>
            <person name="Skelton S."/>
            <person name="Squares S."/>
            <person name="Squares R."/>
            <person name="Sulston J.E."/>
            <person name="Taylor K."/>
            <person name="Whitehead S."/>
            <person name="Barrell B.G."/>
        </authorList>
    </citation>
    <scope>NUCLEOTIDE SEQUENCE [LARGE SCALE GENOMIC DNA]</scope>
    <source>
        <strain>ATCC 25618 / H37Rv</strain>
    </source>
</reference>
<reference key="2">
    <citation type="journal article" date="2015" name="Mol. Microbiol.">
        <title>The Psp system of Mycobacterium tuberculosis integrates envelope stress-sensing and envelope-preserving functions.</title>
        <authorList>
            <person name="Datta P."/>
            <person name="Ravi J."/>
            <person name="Guerrini V."/>
            <person name="Chauhan R."/>
            <person name="Neiditch M.B."/>
            <person name="Shell S.S."/>
            <person name="Fortune S.M."/>
            <person name="Hancioglu B."/>
            <person name="Igoshin O.A."/>
            <person name="Gennaro M.L."/>
        </authorList>
    </citation>
    <scope>FUNCTION</scope>
    <scope>INTERACTION WITH RV2743C</scope>
    <scope>INDUCTION</scope>
    <scope>DISRUPTION PHENOTYPE</scope>
</reference>
<name>Y274C_MYCTU</name>
<proteinExistence type="evidence at protein level"/>